<feature type="chain" id="PRO_1000005992" description="DNA-directed RNA polymerase subunit omega">
    <location>
        <begin position="1"/>
        <end position="130"/>
    </location>
</feature>
<feature type="region of interest" description="Disordered" evidence="2">
    <location>
        <begin position="80"/>
        <end position="130"/>
    </location>
</feature>
<feature type="compositionally biased region" description="Basic and acidic residues" evidence="2">
    <location>
        <begin position="103"/>
        <end position="114"/>
    </location>
</feature>
<evidence type="ECO:0000255" key="1">
    <source>
        <dbReference type="HAMAP-Rule" id="MF_00366"/>
    </source>
</evidence>
<evidence type="ECO:0000256" key="2">
    <source>
        <dbReference type="SAM" id="MobiDB-lite"/>
    </source>
</evidence>
<gene>
    <name evidence="1" type="primary">rpoZ</name>
    <name type="ordered locus">RPC_2634</name>
</gene>
<accession>Q214K2</accession>
<protein>
    <recommendedName>
        <fullName evidence="1">DNA-directed RNA polymerase subunit omega</fullName>
        <shortName evidence="1">RNAP omega subunit</shortName>
        <ecNumber evidence="1">2.7.7.6</ecNumber>
    </recommendedName>
    <alternativeName>
        <fullName evidence="1">RNA polymerase omega subunit</fullName>
    </alternativeName>
    <alternativeName>
        <fullName evidence="1">Transcriptase subunit omega</fullName>
    </alternativeName>
</protein>
<organism>
    <name type="scientific">Rhodopseudomonas palustris (strain BisB18)</name>
    <dbReference type="NCBI Taxonomy" id="316056"/>
    <lineage>
        <taxon>Bacteria</taxon>
        <taxon>Pseudomonadati</taxon>
        <taxon>Pseudomonadota</taxon>
        <taxon>Alphaproteobacteria</taxon>
        <taxon>Hyphomicrobiales</taxon>
        <taxon>Nitrobacteraceae</taxon>
        <taxon>Rhodopseudomonas</taxon>
    </lineage>
</organism>
<proteinExistence type="inferred from homology"/>
<name>RPOZ_RHOPB</name>
<reference key="1">
    <citation type="submission" date="2006-03" db="EMBL/GenBank/DDBJ databases">
        <title>Complete sequence of Rhodopseudomonas palustris BisB18.</title>
        <authorList>
            <consortium name="US DOE Joint Genome Institute"/>
            <person name="Copeland A."/>
            <person name="Lucas S."/>
            <person name="Lapidus A."/>
            <person name="Barry K."/>
            <person name="Detter J.C."/>
            <person name="Glavina del Rio T."/>
            <person name="Hammon N."/>
            <person name="Israni S."/>
            <person name="Dalin E."/>
            <person name="Tice H."/>
            <person name="Pitluck S."/>
            <person name="Chain P."/>
            <person name="Malfatti S."/>
            <person name="Shin M."/>
            <person name="Vergez L."/>
            <person name="Schmutz J."/>
            <person name="Larimer F."/>
            <person name="Land M."/>
            <person name="Hauser L."/>
            <person name="Pelletier D.A."/>
            <person name="Kyrpides N."/>
            <person name="Anderson I."/>
            <person name="Oda Y."/>
            <person name="Harwood C.S."/>
            <person name="Richardson P."/>
        </authorList>
    </citation>
    <scope>NUCLEOTIDE SEQUENCE [LARGE SCALE GENOMIC DNA]</scope>
    <source>
        <strain>BisB18</strain>
    </source>
</reference>
<comment type="function">
    <text evidence="1">Promotes RNA polymerase assembly. Latches the N- and C-terminal regions of the beta' subunit thereby facilitating its interaction with the beta and alpha subunits.</text>
</comment>
<comment type="catalytic activity">
    <reaction evidence="1">
        <text>RNA(n) + a ribonucleoside 5'-triphosphate = RNA(n+1) + diphosphate</text>
        <dbReference type="Rhea" id="RHEA:21248"/>
        <dbReference type="Rhea" id="RHEA-COMP:14527"/>
        <dbReference type="Rhea" id="RHEA-COMP:17342"/>
        <dbReference type="ChEBI" id="CHEBI:33019"/>
        <dbReference type="ChEBI" id="CHEBI:61557"/>
        <dbReference type="ChEBI" id="CHEBI:140395"/>
        <dbReference type="EC" id="2.7.7.6"/>
    </reaction>
</comment>
<comment type="subunit">
    <text evidence="1">The RNAP catalytic core consists of 2 alpha, 1 beta, 1 beta' and 1 omega subunit. When a sigma factor is associated with the core the holoenzyme is formed, which can initiate transcription.</text>
</comment>
<comment type="similarity">
    <text evidence="1">Belongs to the RNA polymerase subunit omega family.</text>
</comment>
<dbReference type="EC" id="2.7.7.6" evidence="1"/>
<dbReference type="EMBL" id="CP000301">
    <property type="protein sequence ID" value="ABD88184.1"/>
    <property type="molecule type" value="Genomic_DNA"/>
</dbReference>
<dbReference type="SMR" id="Q214K2"/>
<dbReference type="STRING" id="316056.RPC_2634"/>
<dbReference type="KEGG" id="rpc:RPC_2634"/>
<dbReference type="eggNOG" id="COG1758">
    <property type="taxonomic scope" value="Bacteria"/>
</dbReference>
<dbReference type="HOGENOM" id="CLU_125406_2_0_5"/>
<dbReference type="OrthoDB" id="9796300at2"/>
<dbReference type="GO" id="GO:0000428">
    <property type="term" value="C:DNA-directed RNA polymerase complex"/>
    <property type="evidence" value="ECO:0007669"/>
    <property type="project" value="UniProtKB-KW"/>
</dbReference>
<dbReference type="GO" id="GO:0003677">
    <property type="term" value="F:DNA binding"/>
    <property type="evidence" value="ECO:0007669"/>
    <property type="project" value="UniProtKB-UniRule"/>
</dbReference>
<dbReference type="GO" id="GO:0003899">
    <property type="term" value="F:DNA-directed RNA polymerase activity"/>
    <property type="evidence" value="ECO:0007669"/>
    <property type="project" value="UniProtKB-UniRule"/>
</dbReference>
<dbReference type="GO" id="GO:0006351">
    <property type="term" value="P:DNA-templated transcription"/>
    <property type="evidence" value="ECO:0007669"/>
    <property type="project" value="UniProtKB-UniRule"/>
</dbReference>
<dbReference type="Gene3D" id="3.90.940.10">
    <property type="match status" value="1"/>
</dbReference>
<dbReference type="HAMAP" id="MF_00366">
    <property type="entry name" value="RNApol_bact_RpoZ"/>
    <property type="match status" value="1"/>
</dbReference>
<dbReference type="InterPro" id="IPR003716">
    <property type="entry name" value="DNA-dir_RNA_pol_omega"/>
</dbReference>
<dbReference type="InterPro" id="IPR006110">
    <property type="entry name" value="Pol_omega/Rpo6/RPB6"/>
</dbReference>
<dbReference type="InterPro" id="IPR036161">
    <property type="entry name" value="RPB6/omega-like_sf"/>
</dbReference>
<dbReference type="NCBIfam" id="TIGR00690">
    <property type="entry name" value="rpoZ"/>
    <property type="match status" value="1"/>
</dbReference>
<dbReference type="PANTHER" id="PTHR34476">
    <property type="entry name" value="DNA-DIRECTED RNA POLYMERASE SUBUNIT OMEGA"/>
    <property type="match status" value="1"/>
</dbReference>
<dbReference type="PANTHER" id="PTHR34476:SF1">
    <property type="entry name" value="DNA-DIRECTED RNA POLYMERASE SUBUNIT OMEGA"/>
    <property type="match status" value="1"/>
</dbReference>
<dbReference type="Pfam" id="PF01192">
    <property type="entry name" value="RNA_pol_Rpb6"/>
    <property type="match status" value="1"/>
</dbReference>
<dbReference type="SMART" id="SM01409">
    <property type="entry name" value="RNA_pol_Rpb6"/>
    <property type="match status" value="1"/>
</dbReference>
<dbReference type="SUPFAM" id="SSF63562">
    <property type="entry name" value="RPB6/omega subunit-like"/>
    <property type="match status" value="1"/>
</dbReference>
<keyword id="KW-0240">DNA-directed RNA polymerase</keyword>
<keyword id="KW-0548">Nucleotidyltransferase</keyword>
<keyword id="KW-0804">Transcription</keyword>
<keyword id="KW-0808">Transferase</keyword>
<sequence>MARVTVEDCIDKVDNRFDLVLLAAHRARMISSGSQLTIDRDNDKNPVVSLREIAEETISPEDLREELVHSLQKFVEVDEPEPDTVPLIGSAGASVDADDTEVAPERMTEEELLKGLEGLAPPEEQPEEDE</sequence>